<dbReference type="EMBL" id="AY957499">
    <property type="protein sequence ID" value="AAY34703.1"/>
    <property type="molecule type" value="Genomic_DNA"/>
</dbReference>
<dbReference type="RefSeq" id="NP_001039331.1">
    <property type="nucleotide sequence ID" value="NM_001045866.1"/>
</dbReference>
<dbReference type="RefSeq" id="XP_005223266.1">
    <property type="nucleotide sequence ID" value="XM_005223209.3"/>
</dbReference>
<dbReference type="RefSeq" id="XP_005223267.1">
    <property type="nucleotide sequence ID" value="XM_005223210.3"/>
</dbReference>
<dbReference type="RefSeq" id="XP_005223268.1">
    <property type="nucleotide sequence ID" value="XM_005223211.5"/>
</dbReference>
<dbReference type="RefSeq" id="XP_015315205.1">
    <property type="nucleotide sequence ID" value="XM_015459719.3"/>
</dbReference>
<dbReference type="RefSeq" id="XP_015315206.1">
    <property type="nucleotide sequence ID" value="XM_015459720.1"/>
</dbReference>
<dbReference type="RefSeq" id="XP_024839204.1">
    <property type="nucleotide sequence ID" value="XM_024983436.2"/>
</dbReference>
<dbReference type="SMR" id="Q32S26"/>
<dbReference type="FunCoup" id="Q32S26">
    <property type="interactions" value="3995"/>
</dbReference>
<dbReference type="STRING" id="9913.ENSBTAP00000014704"/>
<dbReference type="PaxDb" id="9913-ENSBTAP00000014704"/>
<dbReference type="Ensembl" id="ENSBTAT00000014704.7">
    <property type="protein sequence ID" value="ENSBTAP00000014704.5"/>
    <property type="gene ID" value="ENSBTAG00000011074.7"/>
</dbReference>
<dbReference type="GeneID" id="505358"/>
<dbReference type="KEGG" id="bta:505358"/>
<dbReference type="CTD" id="6046"/>
<dbReference type="VEuPathDB" id="HostDB:ENSBTAG00000011074"/>
<dbReference type="VGNC" id="VGNC:26557">
    <property type="gene designation" value="BRD2"/>
</dbReference>
<dbReference type="eggNOG" id="KOG1474">
    <property type="taxonomic scope" value="Eukaryota"/>
</dbReference>
<dbReference type="GeneTree" id="ENSGT00940000153385"/>
<dbReference type="HOGENOM" id="CLU_001499_0_4_1"/>
<dbReference type="InParanoid" id="Q32S26"/>
<dbReference type="OMA" id="GGMDQHT"/>
<dbReference type="OrthoDB" id="21449at2759"/>
<dbReference type="TreeFam" id="TF317345"/>
<dbReference type="Proteomes" id="UP000009136">
    <property type="component" value="Chromosome 23"/>
</dbReference>
<dbReference type="Bgee" id="ENSBTAG00000011074">
    <property type="expression patterns" value="Expressed in intramuscular adipose tissue and 105 other cell types or tissues"/>
</dbReference>
<dbReference type="GO" id="GO:0000785">
    <property type="term" value="C:chromatin"/>
    <property type="evidence" value="ECO:0000318"/>
    <property type="project" value="GO_Central"/>
</dbReference>
<dbReference type="GO" id="GO:0005634">
    <property type="term" value="C:nucleus"/>
    <property type="evidence" value="ECO:0000318"/>
    <property type="project" value="GO_Central"/>
</dbReference>
<dbReference type="GO" id="GO:0140012">
    <property type="term" value="F:histone H4K5ac reader activity"/>
    <property type="evidence" value="ECO:0000250"/>
    <property type="project" value="UniProtKB"/>
</dbReference>
<dbReference type="GO" id="GO:0070577">
    <property type="term" value="F:lysine-acetylated histone binding"/>
    <property type="evidence" value="ECO:0000318"/>
    <property type="project" value="GO_Central"/>
</dbReference>
<dbReference type="GO" id="GO:0140588">
    <property type="term" value="P:chromatin looping"/>
    <property type="evidence" value="ECO:0000250"/>
    <property type="project" value="UniProtKB"/>
</dbReference>
<dbReference type="GO" id="GO:0006338">
    <property type="term" value="P:chromatin remodeling"/>
    <property type="evidence" value="ECO:0000318"/>
    <property type="project" value="GO_Central"/>
</dbReference>
<dbReference type="GO" id="GO:0006334">
    <property type="term" value="P:nucleosome assembly"/>
    <property type="evidence" value="ECO:0000250"/>
    <property type="project" value="UniProtKB"/>
</dbReference>
<dbReference type="GO" id="GO:2000330">
    <property type="term" value="P:positive regulation of T-helper 17 cell lineage commitment"/>
    <property type="evidence" value="ECO:0000250"/>
    <property type="project" value="UniProtKB"/>
</dbReference>
<dbReference type="GO" id="GO:0071168">
    <property type="term" value="P:protein localization to chromatin"/>
    <property type="evidence" value="ECO:0000250"/>
    <property type="project" value="UniProtKB"/>
</dbReference>
<dbReference type="GO" id="GO:0006355">
    <property type="term" value="P:regulation of DNA-templated transcription"/>
    <property type="evidence" value="ECO:0000318"/>
    <property type="project" value="GO_Central"/>
</dbReference>
<dbReference type="GO" id="GO:0006357">
    <property type="term" value="P:regulation of transcription by RNA polymerase II"/>
    <property type="evidence" value="ECO:0000250"/>
    <property type="project" value="UniProtKB"/>
</dbReference>
<dbReference type="CDD" id="cd05497">
    <property type="entry name" value="Bromo_Brdt_I_like"/>
    <property type="match status" value="1"/>
</dbReference>
<dbReference type="CDD" id="cd05498">
    <property type="entry name" value="Bromo_Brdt_II_like"/>
    <property type="match status" value="1"/>
</dbReference>
<dbReference type="FunFam" id="1.20.920.10:FF:000003">
    <property type="entry name" value="Bromodomain-containing protein 2"/>
    <property type="match status" value="1"/>
</dbReference>
<dbReference type="FunFam" id="1.20.1270.220:FF:000001">
    <property type="entry name" value="bromodomain-containing protein 2 isoform X1"/>
    <property type="match status" value="1"/>
</dbReference>
<dbReference type="FunFam" id="1.20.920.10:FF:000002">
    <property type="entry name" value="Bromodomain-containing protein 4"/>
    <property type="match status" value="1"/>
</dbReference>
<dbReference type="Gene3D" id="1.20.1270.220">
    <property type="match status" value="1"/>
</dbReference>
<dbReference type="Gene3D" id="1.20.920.10">
    <property type="entry name" value="Bromodomain-like"/>
    <property type="match status" value="2"/>
</dbReference>
<dbReference type="InterPro" id="IPR043508">
    <property type="entry name" value="Bromo_Brdt_I"/>
</dbReference>
<dbReference type="InterPro" id="IPR043509">
    <property type="entry name" value="Bromo_Brdt_II"/>
</dbReference>
<dbReference type="InterPro" id="IPR050935">
    <property type="entry name" value="Bromo_chromatin_reader"/>
</dbReference>
<dbReference type="InterPro" id="IPR001487">
    <property type="entry name" value="Bromodomain"/>
</dbReference>
<dbReference type="InterPro" id="IPR036427">
    <property type="entry name" value="Bromodomain-like_sf"/>
</dbReference>
<dbReference type="InterPro" id="IPR018359">
    <property type="entry name" value="Bromodomain_CS"/>
</dbReference>
<dbReference type="InterPro" id="IPR027353">
    <property type="entry name" value="NET_dom"/>
</dbReference>
<dbReference type="InterPro" id="IPR038336">
    <property type="entry name" value="NET_sf"/>
</dbReference>
<dbReference type="PANTHER" id="PTHR22880:SF240">
    <property type="entry name" value="BROMODOMAIN-CONTAINING PROTEIN 2"/>
    <property type="match status" value="1"/>
</dbReference>
<dbReference type="PANTHER" id="PTHR22880">
    <property type="entry name" value="FALZ-RELATED BROMODOMAIN-CONTAINING PROTEINS"/>
    <property type="match status" value="1"/>
</dbReference>
<dbReference type="Pfam" id="PF17035">
    <property type="entry name" value="BET"/>
    <property type="match status" value="1"/>
</dbReference>
<dbReference type="Pfam" id="PF00439">
    <property type="entry name" value="Bromodomain"/>
    <property type="match status" value="2"/>
</dbReference>
<dbReference type="PRINTS" id="PR00503">
    <property type="entry name" value="BROMODOMAIN"/>
</dbReference>
<dbReference type="SMART" id="SM00297">
    <property type="entry name" value="BROMO"/>
    <property type="match status" value="2"/>
</dbReference>
<dbReference type="SUPFAM" id="SSF47370">
    <property type="entry name" value="Bromodomain"/>
    <property type="match status" value="2"/>
</dbReference>
<dbReference type="PROSITE" id="PS00633">
    <property type="entry name" value="BROMODOMAIN_1"/>
    <property type="match status" value="2"/>
</dbReference>
<dbReference type="PROSITE" id="PS50014">
    <property type="entry name" value="BROMODOMAIN_2"/>
    <property type="match status" value="2"/>
</dbReference>
<dbReference type="PROSITE" id="PS51525">
    <property type="entry name" value="NET"/>
    <property type="match status" value="1"/>
</dbReference>
<keyword id="KW-0007">Acetylation</keyword>
<keyword id="KW-0103">Bromodomain</keyword>
<keyword id="KW-0156">Chromatin regulator</keyword>
<keyword id="KW-0158">Chromosome</keyword>
<keyword id="KW-0539">Nucleus</keyword>
<keyword id="KW-0597">Phosphoprotein</keyword>
<keyword id="KW-1185">Reference proteome</keyword>
<keyword id="KW-0677">Repeat</keyword>
<keyword id="KW-0804">Transcription</keyword>
<keyword id="KW-0805">Transcription regulation</keyword>
<comment type="function">
    <text evidence="1">Chromatin reader protein that specifically recognizes and binds histone H4 acetylated at 'Lys-5' and 'Lys-12' (H4K5ac and H4K12ac, respectively), thereby controlling gene expression and remodeling chromatin structures. Recruits transcription factors and coactivators to target gene sites, and activates RNA polymerase II machinery for transcriptional elongation. Plays a key role in genome compartmentalization via its association with CTCF and cohesin: recruited to chromatin by CTCF and promotes formation of topologically associating domains (TADs) via its ability to bind acetylated histones, contributing to CTCF boundary formation and enhancer insulation. Also recognizes and binds acetylated non-histone proteins, such as STAT3. Involved in inflammatory response by regulating differentiation of naive CD4(+) T-cells into T-helper Th17: recognizes and binds STAT3 acetylated at 'Lys-87', promoting STAT3 recruitment to chromatin. In addition to acetylated lysines, also recognizes and binds lysine residues on histones that are both methylated and acetylated on the same side chain to form N6-acetyl-N6-methyllysine (Kacme), an epigenetic mark of active chromatin associated with increased transcriptional initiation. Specifically binds histone H4 acetyl-methylated at 'Lys-5' and 'Lys-12' (H4K5acme and H4K12acme, respectively).</text>
</comment>
<comment type="subunit">
    <text evidence="1 2">Homodimer. Interacts with E2F1. Interacts with (acetylated) STAT3; promoting STAT3 recruitment to chromatin (By similarity). Interacts with CTCF; promoting BRD2 recruitment to chromatin (By similarity).</text>
</comment>
<comment type="subcellular location">
    <subcellularLocation>
        <location evidence="1">Nucleus</location>
    </subcellularLocation>
    <subcellularLocation>
        <location evidence="1">Chromosome</location>
    </subcellularLocation>
    <text evidence="1">Detected on chromatin and nucleosomes.</text>
</comment>
<comment type="domain">
    <text evidence="1">The first bromo domain specifically recognizes histone H4 acetylated at 'Lys-12' (H4K12ac). It also specifically binds histone H4 acetyl-methylated at 'Lys-5' and 'Lys-12' (H4K5acme and H4K12acme, respectively). The second bromo domain recognizes and binds histone H4 acetylated at 'Lys-5' and 'Lys-12' (H4K5ac and H4K12ac, respectively).</text>
</comment>
<comment type="similarity">
    <text evidence="7">Belongs to the BET family.</text>
</comment>
<evidence type="ECO:0000250" key="1">
    <source>
        <dbReference type="UniProtKB" id="P25440"/>
    </source>
</evidence>
<evidence type="ECO:0000250" key="2">
    <source>
        <dbReference type="UniProtKB" id="Q7JJ13"/>
    </source>
</evidence>
<evidence type="ECO:0000255" key="3"/>
<evidence type="ECO:0000255" key="4">
    <source>
        <dbReference type="PROSITE-ProRule" id="PRU00035"/>
    </source>
</evidence>
<evidence type="ECO:0000255" key="5">
    <source>
        <dbReference type="PROSITE-ProRule" id="PRU00857"/>
    </source>
</evidence>
<evidence type="ECO:0000256" key="6">
    <source>
        <dbReference type="SAM" id="MobiDB-lite"/>
    </source>
</evidence>
<evidence type="ECO:0000305" key="7"/>
<feature type="chain" id="PRO_0000239862" description="Bromodomain-containing protein 2">
    <location>
        <begin position="1"/>
        <end position="803"/>
    </location>
</feature>
<feature type="domain" description="Bromo 1" evidence="4">
    <location>
        <begin position="74"/>
        <end position="180"/>
    </location>
</feature>
<feature type="domain" description="Bromo 2" evidence="4">
    <location>
        <begin position="344"/>
        <end position="453"/>
    </location>
</feature>
<feature type="domain" description="NET" evidence="5">
    <location>
        <begin position="634"/>
        <end position="716"/>
    </location>
</feature>
<feature type="region of interest" description="Disordered" evidence="6">
    <location>
        <begin position="53"/>
        <end position="73"/>
    </location>
</feature>
<feature type="region of interest" description="Disordered" evidence="6">
    <location>
        <begin position="268"/>
        <end position="348"/>
    </location>
</feature>
<feature type="region of interest" description="Disordered" evidence="6">
    <location>
        <begin position="456"/>
        <end position="652"/>
    </location>
</feature>
<feature type="region of interest" description="Disordered" evidence="6">
    <location>
        <begin position="739"/>
        <end position="803"/>
    </location>
</feature>
<feature type="short sequence motif" description="Nuclear localization signal" evidence="3">
    <location>
        <begin position="556"/>
        <end position="560"/>
    </location>
</feature>
<feature type="compositionally biased region" description="Low complexity" evidence="6">
    <location>
        <begin position="285"/>
        <end position="298"/>
    </location>
</feature>
<feature type="compositionally biased region" description="Basic and acidic residues" evidence="6">
    <location>
        <begin position="316"/>
        <end position="332"/>
    </location>
</feature>
<feature type="compositionally biased region" description="Acidic residues" evidence="6">
    <location>
        <begin position="481"/>
        <end position="515"/>
    </location>
</feature>
<feature type="compositionally biased region" description="Basic residues" evidence="6">
    <location>
        <begin position="545"/>
        <end position="567"/>
    </location>
</feature>
<feature type="compositionally biased region" description="Low complexity" evidence="6">
    <location>
        <begin position="623"/>
        <end position="632"/>
    </location>
</feature>
<feature type="compositionally biased region" description="Basic and acidic residues" evidence="6">
    <location>
        <begin position="641"/>
        <end position="652"/>
    </location>
</feature>
<feature type="compositionally biased region" description="Low complexity" evidence="6">
    <location>
        <begin position="777"/>
        <end position="797"/>
    </location>
</feature>
<feature type="binding site" evidence="1">
    <location>
        <position position="112"/>
    </location>
    <ligand>
        <name>a protein</name>
        <dbReference type="ChEBI" id="CHEBI:16541"/>
    </ligand>
    <ligandPart>
        <name>N(6)-acetyl-N(6)-methyl-L-lysine residue</name>
        <dbReference type="ChEBI" id="CHEBI:197459"/>
    </ligandPart>
</feature>
<feature type="binding site" evidence="1">
    <location>
        <position position="155"/>
    </location>
    <ligand>
        <name>a protein</name>
        <dbReference type="ChEBI" id="CHEBI:16541"/>
    </ligand>
    <ligandPart>
        <name>N(6)-acetyl-N(6)-methyl-L-lysine residue</name>
        <dbReference type="ChEBI" id="CHEBI:197459"/>
    </ligandPart>
</feature>
<feature type="binding site" evidence="1">
    <location>
        <position position="156"/>
    </location>
    <ligand>
        <name>a protein</name>
        <dbReference type="ChEBI" id="CHEBI:16541"/>
    </ligand>
    <ligandPart>
        <name>N(6)-acetyl-L-lysine residue</name>
        <dbReference type="ChEBI" id="CHEBI:61930"/>
    </ligandPart>
</feature>
<feature type="binding site" evidence="1">
    <location>
        <position position="156"/>
    </location>
    <ligand>
        <name>a protein</name>
        <dbReference type="ChEBI" id="CHEBI:16541"/>
    </ligand>
    <ligandPart>
        <name>N(6)-acetyl-N(6)-methyl-L-lysine residue</name>
        <dbReference type="ChEBI" id="CHEBI:197459"/>
    </ligandPart>
</feature>
<feature type="binding site" evidence="1">
    <location>
        <position position="157"/>
    </location>
    <ligand>
        <name>a protein</name>
        <dbReference type="ChEBI" id="CHEBI:16541"/>
    </ligand>
    <ligandPart>
        <name>N(6)-acetyl-N(6)-methyl-L-lysine residue</name>
        <dbReference type="ChEBI" id="CHEBI:197459"/>
    </ligandPart>
</feature>
<feature type="binding site" evidence="1">
    <location>
        <position position="160"/>
    </location>
    <ligand>
        <name>a protein</name>
        <dbReference type="ChEBI" id="CHEBI:16541"/>
    </ligand>
    <ligandPart>
        <name>N(6)-acetyl-L-lysine residue</name>
        <dbReference type="ChEBI" id="CHEBI:61930"/>
    </ligandPart>
</feature>
<feature type="binding site" evidence="1">
    <location>
        <position position="161"/>
    </location>
    <ligand>
        <name>a protein</name>
        <dbReference type="ChEBI" id="CHEBI:16541"/>
    </ligand>
    <ligandPart>
        <name>N(6)-acetyl-L-lysine residue</name>
        <dbReference type="ChEBI" id="CHEBI:61930"/>
    </ligandPart>
</feature>
<feature type="modified residue" description="N-acetylmethionine" evidence="1">
    <location>
        <position position="1"/>
    </location>
</feature>
<feature type="modified residue" description="Phosphothreonine" evidence="1">
    <location>
        <position position="6"/>
    </location>
</feature>
<feature type="modified residue" description="Phosphoserine" evidence="1">
    <location>
        <position position="37"/>
    </location>
</feature>
<feature type="modified residue" description="Phosphoserine" evidence="1">
    <location>
        <position position="298"/>
    </location>
</feature>
<feature type="modified residue" description="Phosphoserine" evidence="1">
    <location>
        <position position="301"/>
    </location>
</feature>
<feature type="modified residue" description="Phosphoserine" evidence="1">
    <location>
        <position position="635"/>
    </location>
</feature>
<name>BRD2_BOVIN</name>
<protein>
    <recommendedName>
        <fullName>Bromodomain-containing protein 2</fullName>
    </recommendedName>
</protein>
<proteinExistence type="inferred from homology"/>
<accession>Q32S26</accession>
<sequence length="803" mass="88122">MLQNVTPHNKLPGEGNAGLLGLGPEAAAPGKRIRKPSLLYEGFESPTMASVPALQLTPANPPPPEVSNPKKPGRVTNQLQYLHKVVMKALWKHQFAWPFRQPVDAVKLGLPDYHKIIKQPMDMGTIKRRLENNYYWAASECMQDFNTMFTNCYIYNKPTDDIVLMAQTLEKIFLQKVASMPQEEQELVVTIPKNSHKKGAKLAALQGSITSAHQVPAVSSVSHTALYTPPPEIPTTVLNIPHPSVISSPLLKSLHSAGPPLLAVSAAPPAQPLAKKKGVKRKADTTTPTPTAILAPGSPASPPGGLEPKAARLPPVRRESGRPIKPPRKDLPDSQQQHQSSKKGKLSEQLKHCNGILKELLSKKHAAYAWPFYKPVDASALGLHDYHDIIKHPMDLSTVKRKMENRDYRDAQEFAADVRLMFSNCYKYNPPDHDVVAMARKLQDVFEFRYAKMPDEPLEPGPLPVSTALPPGLAKSSSESSSEESSSESSSEEEEEEDEDEEEEEEESESSDSEEERAHRLAELQEQLRAVHEQLAALSQGPISKPKRKREKKEKKKKRKAEKHRGRAGADEDDKGPRAPRPSQPKKSKKAGGGGSSGAATLGPPGFGPSGGGATKLPKKATKTAPPALPAGYDSEEEEESRPMSYDEKRQLSLDINKLPGEKLGRVVHIIQAREPSLRDSNPEEIEIDFETLKPSTLRELERYVLSCLRKKPRKPYTIKKPVGKTKEELALEKKRELEKRLQDVSGQLNSTKKPPKKASEKTETSSAQQVAVSRLSASSSSSDSSSSSSSSSSSDTSDSDSG</sequence>
<gene>
    <name type="primary">BRD2</name>
</gene>
<organism>
    <name type="scientific">Bos taurus</name>
    <name type="common">Bovine</name>
    <dbReference type="NCBI Taxonomy" id="9913"/>
    <lineage>
        <taxon>Eukaryota</taxon>
        <taxon>Metazoa</taxon>
        <taxon>Chordata</taxon>
        <taxon>Craniata</taxon>
        <taxon>Vertebrata</taxon>
        <taxon>Euteleostomi</taxon>
        <taxon>Mammalia</taxon>
        <taxon>Eutheria</taxon>
        <taxon>Laurasiatheria</taxon>
        <taxon>Artiodactyla</taxon>
        <taxon>Ruminantia</taxon>
        <taxon>Pecora</taxon>
        <taxon>Bovidae</taxon>
        <taxon>Bovinae</taxon>
        <taxon>Bos</taxon>
    </lineage>
</organism>
<reference key="1">
    <citation type="journal article" date="2006" name="Anim. Genet.">
        <title>Comparative analysis of the bovine MHC class IIb sequence identifies inversion breakpoints and three unexpected genes.</title>
        <authorList>
            <person name="Childers C.P."/>
            <person name="Newkirk H.L."/>
            <person name="Honeycutt D.A."/>
            <person name="Ramlachan N."/>
            <person name="Muzney D.M."/>
            <person name="Sodergren E."/>
            <person name="Gibbs R.A."/>
            <person name="Weinstock G.M."/>
            <person name="Womack J.E."/>
            <person name="Skow L.C."/>
        </authorList>
    </citation>
    <scope>NUCLEOTIDE SEQUENCE [LARGE SCALE GENOMIC DNA]</scope>
</reference>